<name>SYR_STAES</name>
<keyword id="KW-0030">Aminoacyl-tRNA synthetase</keyword>
<keyword id="KW-0067">ATP-binding</keyword>
<keyword id="KW-0963">Cytoplasm</keyword>
<keyword id="KW-0436">Ligase</keyword>
<keyword id="KW-0547">Nucleotide-binding</keyword>
<keyword id="KW-0648">Protein biosynthesis</keyword>
<protein>
    <recommendedName>
        <fullName evidence="1">Arginine--tRNA ligase</fullName>
        <ecNumber evidence="1">6.1.1.19</ecNumber>
    </recommendedName>
    <alternativeName>
        <fullName evidence="1">Arginyl-tRNA synthetase</fullName>
        <shortName evidence="1">ArgRS</shortName>
    </alternativeName>
</protein>
<comment type="catalytic activity">
    <reaction evidence="1">
        <text>tRNA(Arg) + L-arginine + ATP = L-arginyl-tRNA(Arg) + AMP + diphosphate</text>
        <dbReference type="Rhea" id="RHEA:20301"/>
        <dbReference type="Rhea" id="RHEA-COMP:9658"/>
        <dbReference type="Rhea" id="RHEA-COMP:9673"/>
        <dbReference type="ChEBI" id="CHEBI:30616"/>
        <dbReference type="ChEBI" id="CHEBI:32682"/>
        <dbReference type="ChEBI" id="CHEBI:33019"/>
        <dbReference type="ChEBI" id="CHEBI:78442"/>
        <dbReference type="ChEBI" id="CHEBI:78513"/>
        <dbReference type="ChEBI" id="CHEBI:456215"/>
        <dbReference type="EC" id="6.1.1.19"/>
    </reaction>
</comment>
<comment type="subunit">
    <text evidence="1">Monomer.</text>
</comment>
<comment type="subcellular location">
    <subcellularLocation>
        <location evidence="1">Cytoplasm</location>
    </subcellularLocation>
</comment>
<comment type="similarity">
    <text evidence="1">Belongs to the class-I aminoacyl-tRNA synthetase family.</text>
</comment>
<evidence type="ECO:0000255" key="1">
    <source>
        <dbReference type="HAMAP-Rule" id="MF_00123"/>
    </source>
</evidence>
<dbReference type="EC" id="6.1.1.19" evidence="1"/>
<dbReference type="EMBL" id="AE015929">
    <property type="protein sequence ID" value="AAO03977.1"/>
    <property type="molecule type" value="Genomic_DNA"/>
</dbReference>
<dbReference type="RefSeq" id="NP_763935.1">
    <property type="nucleotide sequence ID" value="NC_004461.1"/>
</dbReference>
<dbReference type="RefSeq" id="WP_002438772.1">
    <property type="nucleotide sequence ID" value="NZ_WBME01000026.1"/>
</dbReference>
<dbReference type="SMR" id="Q8CTN9"/>
<dbReference type="DNASU" id="1056748"/>
<dbReference type="GeneID" id="50019461"/>
<dbReference type="KEGG" id="sep:SE_0380"/>
<dbReference type="PATRIC" id="fig|176280.10.peg.354"/>
<dbReference type="eggNOG" id="COG0018">
    <property type="taxonomic scope" value="Bacteria"/>
</dbReference>
<dbReference type="HOGENOM" id="CLU_006406_0_1_9"/>
<dbReference type="OrthoDB" id="9805987at2"/>
<dbReference type="Proteomes" id="UP000001411">
    <property type="component" value="Chromosome"/>
</dbReference>
<dbReference type="GO" id="GO:0005737">
    <property type="term" value="C:cytoplasm"/>
    <property type="evidence" value="ECO:0007669"/>
    <property type="project" value="UniProtKB-SubCell"/>
</dbReference>
<dbReference type="GO" id="GO:0004814">
    <property type="term" value="F:arginine-tRNA ligase activity"/>
    <property type="evidence" value="ECO:0007669"/>
    <property type="project" value="UniProtKB-UniRule"/>
</dbReference>
<dbReference type="GO" id="GO:0005524">
    <property type="term" value="F:ATP binding"/>
    <property type="evidence" value="ECO:0007669"/>
    <property type="project" value="UniProtKB-UniRule"/>
</dbReference>
<dbReference type="GO" id="GO:0006420">
    <property type="term" value="P:arginyl-tRNA aminoacylation"/>
    <property type="evidence" value="ECO:0007669"/>
    <property type="project" value="UniProtKB-UniRule"/>
</dbReference>
<dbReference type="CDD" id="cd07956">
    <property type="entry name" value="Anticodon_Ia_Arg"/>
    <property type="match status" value="1"/>
</dbReference>
<dbReference type="CDD" id="cd00671">
    <property type="entry name" value="ArgRS_core"/>
    <property type="match status" value="1"/>
</dbReference>
<dbReference type="FunFam" id="1.10.730.10:FF:000008">
    <property type="entry name" value="Arginine--tRNA ligase"/>
    <property type="match status" value="1"/>
</dbReference>
<dbReference type="FunFam" id="3.30.1360.70:FF:000003">
    <property type="entry name" value="Arginine--tRNA ligase"/>
    <property type="match status" value="1"/>
</dbReference>
<dbReference type="FunFam" id="3.40.50.620:FF:000062">
    <property type="entry name" value="Arginine--tRNA ligase"/>
    <property type="match status" value="1"/>
</dbReference>
<dbReference type="Gene3D" id="3.30.1360.70">
    <property type="entry name" value="Arginyl tRNA synthetase N-terminal domain"/>
    <property type="match status" value="1"/>
</dbReference>
<dbReference type="Gene3D" id="3.40.50.620">
    <property type="entry name" value="HUPs"/>
    <property type="match status" value="1"/>
</dbReference>
<dbReference type="Gene3D" id="1.10.730.10">
    <property type="entry name" value="Isoleucyl-tRNA Synthetase, Domain 1"/>
    <property type="match status" value="1"/>
</dbReference>
<dbReference type="HAMAP" id="MF_00123">
    <property type="entry name" value="Arg_tRNA_synth"/>
    <property type="match status" value="1"/>
</dbReference>
<dbReference type="InterPro" id="IPR001412">
    <property type="entry name" value="aa-tRNA-synth_I_CS"/>
</dbReference>
<dbReference type="InterPro" id="IPR001278">
    <property type="entry name" value="Arg-tRNA-ligase"/>
</dbReference>
<dbReference type="InterPro" id="IPR005148">
    <property type="entry name" value="Arg-tRNA-synth_N"/>
</dbReference>
<dbReference type="InterPro" id="IPR036695">
    <property type="entry name" value="Arg-tRNA-synth_N_sf"/>
</dbReference>
<dbReference type="InterPro" id="IPR035684">
    <property type="entry name" value="ArgRS_core"/>
</dbReference>
<dbReference type="InterPro" id="IPR008909">
    <property type="entry name" value="DALR_anticod-bd"/>
</dbReference>
<dbReference type="InterPro" id="IPR014729">
    <property type="entry name" value="Rossmann-like_a/b/a_fold"/>
</dbReference>
<dbReference type="InterPro" id="IPR009080">
    <property type="entry name" value="tRNAsynth_Ia_anticodon-bd"/>
</dbReference>
<dbReference type="NCBIfam" id="TIGR00456">
    <property type="entry name" value="argS"/>
    <property type="match status" value="1"/>
</dbReference>
<dbReference type="PANTHER" id="PTHR11956:SF5">
    <property type="entry name" value="ARGININE--TRNA LIGASE, CYTOPLASMIC"/>
    <property type="match status" value="1"/>
</dbReference>
<dbReference type="PANTHER" id="PTHR11956">
    <property type="entry name" value="ARGINYL-TRNA SYNTHETASE"/>
    <property type="match status" value="1"/>
</dbReference>
<dbReference type="Pfam" id="PF03485">
    <property type="entry name" value="Arg_tRNA_synt_N"/>
    <property type="match status" value="1"/>
</dbReference>
<dbReference type="Pfam" id="PF05746">
    <property type="entry name" value="DALR_1"/>
    <property type="match status" value="1"/>
</dbReference>
<dbReference type="Pfam" id="PF00750">
    <property type="entry name" value="tRNA-synt_1d"/>
    <property type="match status" value="1"/>
</dbReference>
<dbReference type="PRINTS" id="PR01038">
    <property type="entry name" value="TRNASYNTHARG"/>
</dbReference>
<dbReference type="SMART" id="SM01016">
    <property type="entry name" value="Arg_tRNA_synt_N"/>
    <property type="match status" value="1"/>
</dbReference>
<dbReference type="SMART" id="SM00836">
    <property type="entry name" value="DALR_1"/>
    <property type="match status" value="1"/>
</dbReference>
<dbReference type="SUPFAM" id="SSF47323">
    <property type="entry name" value="Anticodon-binding domain of a subclass of class I aminoacyl-tRNA synthetases"/>
    <property type="match status" value="1"/>
</dbReference>
<dbReference type="SUPFAM" id="SSF55190">
    <property type="entry name" value="Arginyl-tRNA synthetase (ArgRS), N-terminal 'additional' domain"/>
    <property type="match status" value="1"/>
</dbReference>
<dbReference type="SUPFAM" id="SSF52374">
    <property type="entry name" value="Nucleotidylyl transferase"/>
    <property type="match status" value="1"/>
</dbReference>
<dbReference type="PROSITE" id="PS00178">
    <property type="entry name" value="AA_TRNA_LIGASE_I"/>
    <property type="match status" value="1"/>
</dbReference>
<feature type="chain" id="PRO_0000151611" description="Arginine--tRNA ligase">
    <location>
        <begin position="1"/>
        <end position="553"/>
    </location>
</feature>
<feature type="short sequence motif" description="'HIGH' region">
    <location>
        <begin position="130"/>
        <end position="140"/>
    </location>
</feature>
<proteinExistence type="inferred from homology"/>
<gene>
    <name evidence="1" type="primary">argS</name>
    <name type="ordered locus">SE_0380</name>
</gene>
<accession>Q8CTN9</accession>
<organism>
    <name type="scientific">Staphylococcus epidermidis (strain ATCC 12228 / FDA PCI 1200)</name>
    <dbReference type="NCBI Taxonomy" id="176280"/>
    <lineage>
        <taxon>Bacteria</taxon>
        <taxon>Bacillati</taxon>
        <taxon>Bacillota</taxon>
        <taxon>Bacilli</taxon>
        <taxon>Bacillales</taxon>
        <taxon>Staphylococcaceae</taxon>
        <taxon>Staphylococcus</taxon>
    </lineage>
</organism>
<sequence>MNIIDQVKQTLIEEIEASIRKANLAEDIPEIKIEIPKDTKNGDYSSNIAMVLTKIAKRNPREIAQAIVDHLDTSKAHVKQVDIAGPGFINFYLDNQYLTDIIPEAITKGDRFGYATQSKNTNILLEYVSANPTGDLHIGHARNAAVGDSLANILIAAGYNVTREYYINDAGNQITNLARSIEARYFEALGDTSYEMPADGYNGKDIIEIGKDLAVKHPEIKDYSDEERLKTFRQLGVDYEMEKLKKDLSDFNVHFDNWFSETSLYENGAIKNTLSKMKELGYTYEADGATWLRTSDFKDDKDRVLIKKDGNYTYFTPDTAYHYNKINRGNDILIDLMGADHHGYINRLKASLETFGVDSDRLEIQIMQMVRLMQNGEEVKMSKRTGNAITLREIMDEVGIDAARYFLTMRSPDSHFDFDLELAKEQSQDNPIYYAQYAHARICSILKQAKEQGIEVSTDADFSKINNDKAIDLLKKVAEFESTIESAAEHRAPHRLTNYIQDLAAAFHKFYNAEKVLTDDTEKTKAHVAMIEAVRITLHNALALVGVTAPESM</sequence>
<reference key="1">
    <citation type="journal article" date="2003" name="Mol. Microbiol.">
        <title>Genome-based analysis of virulence genes in a non-biofilm-forming Staphylococcus epidermidis strain (ATCC 12228).</title>
        <authorList>
            <person name="Zhang Y.-Q."/>
            <person name="Ren S.-X."/>
            <person name="Li H.-L."/>
            <person name="Wang Y.-X."/>
            <person name="Fu G."/>
            <person name="Yang J."/>
            <person name="Qin Z.-Q."/>
            <person name="Miao Y.-G."/>
            <person name="Wang W.-Y."/>
            <person name="Chen R.-S."/>
            <person name="Shen Y."/>
            <person name="Chen Z."/>
            <person name="Yuan Z.-H."/>
            <person name="Zhao G.-P."/>
            <person name="Qu D."/>
            <person name="Danchin A."/>
            <person name="Wen Y.-M."/>
        </authorList>
    </citation>
    <scope>NUCLEOTIDE SEQUENCE [LARGE SCALE GENOMIC DNA]</scope>
    <source>
        <strain>ATCC 12228 / FDA PCI 1200</strain>
    </source>
</reference>